<keyword id="KW-0025">Alternative splicing</keyword>
<keyword id="KW-0378">Hydrolase</keyword>
<keyword id="KW-0479">Metal-binding</keyword>
<keyword id="KW-0597">Phosphoprotein</keyword>
<keyword id="KW-1267">Proteomics identification</keyword>
<keyword id="KW-1185">Reference proteome</keyword>
<keyword id="KW-0819">tRNA processing</keyword>
<keyword id="KW-0862">Zinc</keyword>
<sequence>MWTADEIAQLCYEHYGIRLPKKGKPEPNHEWTLLAAVVKIQSPADKACDTPDKPVQVTKEVVSMGTGTKCIGQSKMRKNGDILNDSHAEVIARRSFQRYLLHQLQLAATLKEDSIFVPGTQKGVWKLRRDLIFVFFSSHTPCGDASIIPMLEFEDQPCCPVFRNWAHNSSVEASSNLEAPGNERKCEDPDSPVTKKMRLEPGTAAREVTNGAAHHQSFGKQKSGPISPGIHSCDLTVEGLATVTRIAPGSAKVIDVYRTGAKCVPGEAGDSGKPGAAFHQVGLLRVKPGRGDRTRSMSCSDKMARWNVLGCQGALLMHLLEEPIYLSAVVIGKCPYSQEAMQRALIGRCQNVSALPKGFGVQELKILQSDLLFEQSRSAVQAKRADSPGRLVPCGAAISWSAVPEQPLDVTANGFPQGTTKKTIGSLQARSQISKVELFRSFQKLLSRIARDKWPHSLRVQKLDTYQEYKEAASSYQEAWSTLRKQVFGSWIRNPPDYHQFK</sequence>
<dbReference type="EC" id="3.5.4.34"/>
<dbReference type="EMBL" id="AF125188">
    <property type="protein sequence ID" value="AAD48376.1"/>
    <property type="molecule type" value="mRNA"/>
</dbReference>
<dbReference type="EMBL" id="AK001687">
    <property type="protein sequence ID" value="BAA91837.1"/>
    <property type="molecule type" value="mRNA"/>
</dbReference>
<dbReference type="EMBL" id="BC002758">
    <property type="protein sequence ID" value="AAH02758.1"/>
    <property type="molecule type" value="mRNA"/>
</dbReference>
<dbReference type="CCDS" id="CCDS10922.1">
    <molecule id="Q9BUB4-1"/>
</dbReference>
<dbReference type="RefSeq" id="NP_001311373.1">
    <molecule id="Q9BUB4-2"/>
    <property type="nucleotide sequence ID" value="NM_001324444.2"/>
</dbReference>
<dbReference type="RefSeq" id="NP_001311374.1">
    <molecule id="Q9BUB4-1"/>
    <property type="nucleotide sequence ID" value="NM_001324445.2"/>
</dbReference>
<dbReference type="RefSeq" id="NP_001311375.1">
    <molecule id="Q9BUB4-2"/>
    <property type="nucleotide sequence ID" value="NM_001324446.2"/>
</dbReference>
<dbReference type="RefSeq" id="NP_036223.2">
    <molecule id="Q9BUB4-1"/>
    <property type="nucleotide sequence ID" value="NM_012091.5"/>
</dbReference>
<dbReference type="SMR" id="Q9BUB4"/>
<dbReference type="BioGRID" id="117081">
    <property type="interactions" value="11"/>
</dbReference>
<dbReference type="FunCoup" id="Q9BUB4">
    <property type="interactions" value="2160"/>
</dbReference>
<dbReference type="IntAct" id="Q9BUB4">
    <property type="interactions" value="1"/>
</dbReference>
<dbReference type="MINT" id="Q9BUB4"/>
<dbReference type="STRING" id="9606.ENSP00000310015"/>
<dbReference type="iPTMnet" id="Q9BUB4"/>
<dbReference type="PhosphoSitePlus" id="Q9BUB4"/>
<dbReference type="BioMuta" id="ADAT1"/>
<dbReference type="DMDM" id="74733201"/>
<dbReference type="jPOST" id="Q9BUB4"/>
<dbReference type="MassIVE" id="Q9BUB4"/>
<dbReference type="PaxDb" id="9606-ENSP00000310015"/>
<dbReference type="PeptideAtlas" id="Q9BUB4"/>
<dbReference type="ProteomicsDB" id="79070">
    <molecule id="Q9BUB4-1"/>
</dbReference>
<dbReference type="ProteomicsDB" id="79071">
    <molecule id="Q9BUB4-2"/>
</dbReference>
<dbReference type="Pumba" id="Q9BUB4"/>
<dbReference type="Antibodypedia" id="16832">
    <property type="antibodies" value="165 antibodies from 22 providers"/>
</dbReference>
<dbReference type="DNASU" id="23536"/>
<dbReference type="Ensembl" id="ENST00000307921.7">
    <molecule id="Q9BUB4-1"/>
    <property type="protein sequence ID" value="ENSP00000310015.3"/>
    <property type="gene ID" value="ENSG00000065457.11"/>
</dbReference>
<dbReference type="Ensembl" id="ENST00000564657.2">
    <molecule id="Q9BUB4-1"/>
    <property type="protein sequence ID" value="ENSP00000457501.2"/>
    <property type="gene ID" value="ENSG00000065457.11"/>
</dbReference>
<dbReference type="GeneID" id="23536"/>
<dbReference type="KEGG" id="hsa:23536"/>
<dbReference type="MANE-Select" id="ENST00000564657.2">
    <property type="protein sequence ID" value="ENSP00000457501.2"/>
    <property type="RefSeq nucleotide sequence ID" value="NM_001324445.2"/>
    <property type="RefSeq protein sequence ID" value="NP_001311374.1"/>
</dbReference>
<dbReference type="UCSC" id="uc002feo.3">
    <molecule id="Q9BUB4-1"/>
    <property type="organism name" value="human"/>
</dbReference>
<dbReference type="AGR" id="HGNC:228"/>
<dbReference type="CTD" id="23536"/>
<dbReference type="DisGeNET" id="23536"/>
<dbReference type="GeneCards" id="ADAT1"/>
<dbReference type="HGNC" id="HGNC:228">
    <property type="gene designation" value="ADAT1"/>
</dbReference>
<dbReference type="HPA" id="ENSG00000065457">
    <property type="expression patterns" value="Low tissue specificity"/>
</dbReference>
<dbReference type="MalaCards" id="ADAT1"/>
<dbReference type="MIM" id="604230">
    <property type="type" value="gene"/>
</dbReference>
<dbReference type="neXtProt" id="NX_Q9BUB4"/>
<dbReference type="OpenTargets" id="ENSG00000065457"/>
<dbReference type="PharmGKB" id="PA24558"/>
<dbReference type="VEuPathDB" id="HostDB:ENSG00000065457"/>
<dbReference type="eggNOG" id="KOG2777">
    <property type="taxonomic scope" value="Eukaryota"/>
</dbReference>
<dbReference type="GeneTree" id="ENSGT00940000157942"/>
<dbReference type="HOGENOM" id="CLU_005382_5_2_1"/>
<dbReference type="InParanoid" id="Q9BUB4"/>
<dbReference type="OMA" id="HPKKITY"/>
<dbReference type="OrthoDB" id="10268011at2759"/>
<dbReference type="PAN-GO" id="Q9BUB4">
    <property type="GO annotations" value="2 GO annotations based on evolutionary models"/>
</dbReference>
<dbReference type="PhylomeDB" id="Q9BUB4"/>
<dbReference type="TreeFam" id="TF315806"/>
<dbReference type="BRENDA" id="3.5.4.34">
    <property type="organism ID" value="2681"/>
</dbReference>
<dbReference type="PathwayCommons" id="Q9BUB4"/>
<dbReference type="Reactome" id="R-HSA-6782315">
    <property type="pathway name" value="tRNA modification in the nucleus and cytosol"/>
</dbReference>
<dbReference type="SignaLink" id="Q9BUB4"/>
<dbReference type="BioGRID-ORCS" id="23536">
    <property type="hits" value="10 hits in 1151 CRISPR screens"/>
</dbReference>
<dbReference type="GenomeRNAi" id="23536"/>
<dbReference type="Pharos" id="Q9BUB4">
    <property type="development level" value="Tbio"/>
</dbReference>
<dbReference type="PRO" id="PR:Q9BUB4"/>
<dbReference type="Proteomes" id="UP000005640">
    <property type="component" value="Chromosome 16"/>
</dbReference>
<dbReference type="RNAct" id="Q9BUB4">
    <property type="molecule type" value="protein"/>
</dbReference>
<dbReference type="Bgee" id="ENSG00000065457">
    <property type="expression patterns" value="Expressed in oocyte and 171 other cell types or tissues"/>
</dbReference>
<dbReference type="ExpressionAtlas" id="Q9BUB4">
    <property type="expression patterns" value="baseline and differential"/>
</dbReference>
<dbReference type="GO" id="GO:0046872">
    <property type="term" value="F:metal ion binding"/>
    <property type="evidence" value="ECO:0007669"/>
    <property type="project" value="UniProtKB-KW"/>
</dbReference>
<dbReference type="GO" id="GO:0003723">
    <property type="term" value="F:RNA binding"/>
    <property type="evidence" value="ECO:0000315"/>
    <property type="project" value="UniProtKB"/>
</dbReference>
<dbReference type="GO" id="GO:0008251">
    <property type="term" value="F:tRNA-specific adenosine deaminase activity"/>
    <property type="evidence" value="ECO:0000315"/>
    <property type="project" value="UniProtKB"/>
</dbReference>
<dbReference type="GO" id="GO:0043829">
    <property type="term" value="F:tRNA-specific adenosine-37 deaminase activity"/>
    <property type="evidence" value="ECO:0007669"/>
    <property type="project" value="UniProtKB-EC"/>
</dbReference>
<dbReference type="GO" id="GO:0008033">
    <property type="term" value="P:tRNA processing"/>
    <property type="evidence" value="ECO:0000315"/>
    <property type="project" value="UniProtKB"/>
</dbReference>
<dbReference type="InterPro" id="IPR002466">
    <property type="entry name" value="A_deamin"/>
</dbReference>
<dbReference type="PANTHER" id="PTHR46516">
    <property type="entry name" value="TRNA-SPECIFIC ADENOSINE DEAMINASE 1"/>
    <property type="match status" value="1"/>
</dbReference>
<dbReference type="PANTHER" id="PTHR46516:SF1">
    <property type="entry name" value="TRNA-SPECIFIC ADENOSINE DEAMINASE 1"/>
    <property type="match status" value="1"/>
</dbReference>
<dbReference type="Pfam" id="PF02137">
    <property type="entry name" value="A_deamin"/>
    <property type="match status" value="1"/>
</dbReference>
<dbReference type="SMART" id="SM00552">
    <property type="entry name" value="ADEAMc"/>
    <property type="match status" value="1"/>
</dbReference>
<dbReference type="PROSITE" id="PS50141">
    <property type="entry name" value="A_DEAMIN_EDITASE"/>
    <property type="match status" value="1"/>
</dbReference>
<protein>
    <recommendedName>
        <fullName>tRNA-specific adenosine deaminase 1</fullName>
        <shortName>hADAT1</shortName>
        <ecNumber>3.5.4.34</ecNumber>
    </recommendedName>
    <alternativeName>
        <fullName>tRNA-specific adenosine-37 deaminase</fullName>
    </alternativeName>
</protein>
<feature type="chain" id="PRO_0000287646" description="tRNA-specific adenosine deaminase 1">
    <location>
        <begin position="1"/>
        <end position="502"/>
    </location>
</feature>
<feature type="domain" description="A to I editase" evidence="3">
    <location>
        <begin position="63"/>
        <end position="501"/>
    </location>
</feature>
<feature type="region of interest" description="Disordered" evidence="4">
    <location>
        <begin position="174"/>
        <end position="194"/>
    </location>
</feature>
<feature type="active site" description="Proton donor" evidence="3">
    <location>
        <position position="89"/>
    </location>
</feature>
<feature type="binding site" evidence="3">
    <location>
        <position position="87"/>
    </location>
    <ligand>
        <name>Zn(2+)</name>
        <dbReference type="ChEBI" id="CHEBI:29105"/>
    </ligand>
</feature>
<feature type="binding site" evidence="1">
    <location>
        <position position="93"/>
    </location>
    <ligand>
        <name>1D-myo-inositol hexakisphosphate</name>
        <dbReference type="ChEBI" id="CHEBI:58130"/>
    </ligand>
</feature>
<feature type="binding site" evidence="1">
    <location>
        <position position="94"/>
    </location>
    <ligand>
        <name>1D-myo-inositol hexakisphosphate</name>
        <dbReference type="ChEBI" id="CHEBI:58130"/>
    </ligand>
</feature>
<feature type="binding site" evidence="3">
    <location>
        <position position="142"/>
    </location>
    <ligand>
        <name>Zn(2+)</name>
        <dbReference type="ChEBI" id="CHEBI:29105"/>
    </ligand>
</feature>
<feature type="binding site" evidence="3">
    <location>
        <position position="299"/>
    </location>
    <ligand>
        <name>Zn(2+)</name>
        <dbReference type="ChEBI" id="CHEBI:29105"/>
    </ligand>
</feature>
<feature type="binding site" evidence="1">
    <location>
        <position position="302"/>
    </location>
    <ligand>
        <name>1D-myo-inositol hexakisphosphate</name>
        <dbReference type="ChEBI" id="CHEBI:58130"/>
    </ligand>
</feature>
<feature type="binding site" evidence="1">
    <location>
        <position position="305"/>
    </location>
    <ligand>
        <name>1D-myo-inositol hexakisphosphate</name>
        <dbReference type="ChEBI" id="CHEBI:58130"/>
    </ligand>
</feature>
<feature type="binding site" evidence="1">
    <location>
        <position position="435"/>
    </location>
    <ligand>
        <name>1D-myo-inositol hexakisphosphate</name>
        <dbReference type="ChEBI" id="CHEBI:58130"/>
    </ligand>
</feature>
<feature type="binding site" evidence="1">
    <location>
        <position position="470"/>
    </location>
    <ligand>
        <name>1D-myo-inositol hexakisphosphate</name>
        <dbReference type="ChEBI" id="CHEBI:58130"/>
    </ligand>
</feature>
<feature type="modified residue" description="Phosphoserine" evidence="2">
    <location>
        <position position="191"/>
    </location>
</feature>
<feature type="splice variant" id="VSP_025579" description="In isoform 2." evidence="6">
    <location>
        <begin position="1"/>
        <end position="149"/>
    </location>
</feature>
<feature type="sequence variant" id="VAR_032340" description="In dbSNP:rs3743598." evidence="5">
    <original>H</original>
    <variation>N</variation>
    <location>
        <position position="167"/>
    </location>
</feature>
<feature type="sequence variant" id="VAR_032341" description="In dbSNP:rs3743599.">
    <original>T</original>
    <variation>N</variation>
    <location>
        <position position="203"/>
    </location>
</feature>
<feature type="sequence variant" id="VAR_061098" description="In dbSNP:rs56029288.">
    <original>I</original>
    <variation>V</variation>
    <location>
        <position position="226"/>
    </location>
</feature>
<feature type="sequence variant" id="VAR_055649" description="In dbSNP:rs3743600.">
    <original>T</original>
    <variation>P</variation>
    <location>
        <position position="242"/>
    </location>
</feature>
<feature type="sequence conflict" description="In Ref. 1; AAD48376." evidence="7" ref="1">
    <original>V</original>
    <variation>I</variation>
    <location>
        <position position="61"/>
    </location>
</feature>
<feature type="sequence conflict" description="In Ref. 2; BAA91837." evidence="7" ref="2">
    <original>F</original>
    <variation>L</variation>
    <location>
        <position position="153"/>
    </location>
</feature>
<feature type="sequence conflict" description="In Ref. 1; AAD48376." evidence="7" ref="1">
    <original>I</original>
    <variation>T</variation>
    <location>
        <position position="254"/>
    </location>
</feature>
<comment type="function">
    <text>Specifically deaminates adenosine-37 to inosine in tRNA-Ala.</text>
</comment>
<comment type="catalytic activity">
    <reaction evidence="5">
        <text>adenosine(37) in tRNA(Ala) + H2O + H(+) = inosine(37) in tRNA(Ala) + NH4(+)</text>
        <dbReference type="Rhea" id="RHEA:50968"/>
        <dbReference type="Rhea" id="RHEA-COMP:12855"/>
        <dbReference type="Rhea" id="RHEA-COMP:12856"/>
        <dbReference type="ChEBI" id="CHEBI:15377"/>
        <dbReference type="ChEBI" id="CHEBI:15378"/>
        <dbReference type="ChEBI" id="CHEBI:28938"/>
        <dbReference type="ChEBI" id="CHEBI:74411"/>
        <dbReference type="ChEBI" id="CHEBI:82852"/>
        <dbReference type="EC" id="3.5.4.34"/>
    </reaction>
</comment>
<comment type="cofactor">
    <cofactor evidence="1">
        <name>1D-myo-inositol hexakisphosphate</name>
        <dbReference type="ChEBI" id="CHEBI:58130"/>
    </cofactor>
    <text evidence="1">Binds 1 myo-inositol hexakisphosphate (IP6) per subunit.</text>
</comment>
<comment type="alternative products">
    <event type="alternative splicing"/>
    <isoform>
        <id>Q9BUB4-1</id>
        <name>1</name>
        <sequence type="displayed"/>
    </isoform>
    <isoform>
        <id>Q9BUB4-2</id>
        <name>2</name>
        <sequence type="described" ref="VSP_025579"/>
    </isoform>
</comment>
<comment type="tissue specificity">
    <text evidence="5">Ubiquitously expressed.</text>
</comment>
<comment type="similarity">
    <text evidence="7">Belongs to the ADAT1 family.</text>
</comment>
<evidence type="ECO:0000250" key="1"/>
<evidence type="ECO:0000250" key="2">
    <source>
        <dbReference type="UniProtKB" id="Q9JHI2"/>
    </source>
</evidence>
<evidence type="ECO:0000255" key="3">
    <source>
        <dbReference type="PROSITE-ProRule" id="PRU00240"/>
    </source>
</evidence>
<evidence type="ECO:0000256" key="4">
    <source>
        <dbReference type="SAM" id="MobiDB-lite"/>
    </source>
</evidence>
<evidence type="ECO:0000269" key="5">
    <source>
    </source>
</evidence>
<evidence type="ECO:0000303" key="6">
    <source>
    </source>
</evidence>
<evidence type="ECO:0000305" key="7"/>
<proteinExistence type="evidence at protein level"/>
<organism>
    <name type="scientific">Homo sapiens</name>
    <name type="common">Human</name>
    <dbReference type="NCBI Taxonomy" id="9606"/>
    <lineage>
        <taxon>Eukaryota</taxon>
        <taxon>Metazoa</taxon>
        <taxon>Chordata</taxon>
        <taxon>Craniata</taxon>
        <taxon>Vertebrata</taxon>
        <taxon>Euteleostomi</taxon>
        <taxon>Mammalia</taxon>
        <taxon>Eutheria</taxon>
        <taxon>Euarchontoglires</taxon>
        <taxon>Primates</taxon>
        <taxon>Haplorrhini</taxon>
        <taxon>Catarrhini</taxon>
        <taxon>Hominidae</taxon>
        <taxon>Homo</taxon>
    </lineage>
</organism>
<reference key="1">
    <citation type="journal article" date="1999" name="Proc. Natl. Acad. Sci. U.S.A.">
        <title>Identification and characterization of a human tRNA-specific adenosine deaminase related to the ADAR family of pre-mRNA editing enzymes.</title>
        <authorList>
            <person name="Maas S."/>
            <person name="Gerber A.P."/>
            <person name="Rich A."/>
        </authorList>
    </citation>
    <scope>NUCLEOTIDE SEQUENCE [MRNA] (ISOFORM 1)</scope>
    <scope>CATALYTIC ACTIVITY</scope>
    <scope>TISSUE SPECIFICITY</scope>
    <scope>VARIANT ASN-167</scope>
    <source>
        <tissue>Brain</tissue>
    </source>
</reference>
<reference key="2">
    <citation type="journal article" date="2004" name="Nat. Genet.">
        <title>Complete sequencing and characterization of 21,243 full-length human cDNAs.</title>
        <authorList>
            <person name="Ota T."/>
            <person name="Suzuki Y."/>
            <person name="Nishikawa T."/>
            <person name="Otsuki T."/>
            <person name="Sugiyama T."/>
            <person name="Irie R."/>
            <person name="Wakamatsu A."/>
            <person name="Hayashi K."/>
            <person name="Sato H."/>
            <person name="Nagai K."/>
            <person name="Kimura K."/>
            <person name="Makita H."/>
            <person name="Sekine M."/>
            <person name="Obayashi M."/>
            <person name="Nishi T."/>
            <person name="Shibahara T."/>
            <person name="Tanaka T."/>
            <person name="Ishii S."/>
            <person name="Yamamoto J."/>
            <person name="Saito K."/>
            <person name="Kawai Y."/>
            <person name="Isono Y."/>
            <person name="Nakamura Y."/>
            <person name="Nagahari K."/>
            <person name="Murakami K."/>
            <person name="Yasuda T."/>
            <person name="Iwayanagi T."/>
            <person name="Wagatsuma M."/>
            <person name="Shiratori A."/>
            <person name="Sudo H."/>
            <person name="Hosoiri T."/>
            <person name="Kaku Y."/>
            <person name="Kodaira H."/>
            <person name="Kondo H."/>
            <person name="Sugawara M."/>
            <person name="Takahashi M."/>
            <person name="Kanda K."/>
            <person name="Yokoi T."/>
            <person name="Furuya T."/>
            <person name="Kikkawa E."/>
            <person name="Omura Y."/>
            <person name="Abe K."/>
            <person name="Kamihara K."/>
            <person name="Katsuta N."/>
            <person name="Sato K."/>
            <person name="Tanikawa M."/>
            <person name="Yamazaki M."/>
            <person name="Ninomiya K."/>
            <person name="Ishibashi T."/>
            <person name="Yamashita H."/>
            <person name="Murakawa K."/>
            <person name="Fujimori K."/>
            <person name="Tanai H."/>
            <person name="Kimata M."/>
            <person name="Watanabe M."/>
            <person name="Hiraoka S."/>
            <person name="Chiba Y."/>
            <person name="Ishida S."/>
            <person name="Ono Y."/>
            <person name="Takiguchi S."/>
            <person name="Watanabe S."/>
            <person name="Yosida M."/>
            <person name="Hotuta T."/>
            <person name="Kusano J."/>
            <person name="Kanehori K."/>
            <person name="Takahashi-Fujii A."/>
            <person name="Hara H."/>
            <person name="Tanase T.-O."/>
            <person name="Nomura Y."/>
            <person name="Togiya S."/>
            <person name="Komai F."/>
            <person name="Hara R."/>
            <person name="Takeuchi K."/>
            <person name="Arita M."/>
            <person name="Imose N."/>
            <person name="Musashino K."/>
            <person name="Yuuki H."/>
            <person name="Oshima A."/>
            <person name="Sasaki N."/>
            <person name="Aotsuka S."/>
            <person name="Yoshikawa Y."/>
            <person name="Matsunawa H."/>
            <person name="Ichihara T."/>
            <person name="Shiohata N."/>
            <person name="Sano S."/>
            <person name="Moriya S."/>
            <person name="Momiyama H."/>
            <person name="Satoh N."/>
            <person name="Takami S."/>
            <person name="Terashima Y."/>
            <person name="Suzuki O."/>
            <person name="Nakagawa S."/>
            <person name="Senoh A."/>
            <person name="Mizoguchi H."/>
            <person name="Goto Y."/>
            <person name="Shimizu F."/>
            <person name="Wakebe H."/>
            <person name="Hishigaki H."/>
            <person name="Watanabe T."/>
            <person name="Sugiyama A."/>
            <person name="Takemoto M."/>
            <person name="Kawakami B."/>
            <person name="Yamazaki M."/>
            <person name="Watanabe K."/>
            <person name="Kumagai A."/>
            <person name="Itakura S."/>
            <person name="Fukuzumi Y."/>
            <person name="Fujimori Y."/>
            <person name="Komiyama M."/>
            <person name="Tashiro H."/>
            <person name="Tanigami A."/>
            <person name="Fujiwara T."/>
            <person name="Ono T."/>
            <person name="Yamada K."/>
            <person name="Fujii Y."/>
            <person name="Ozaki K."/>
            <person name="Hirao M."/>
            <person name="Ohmori Y."/>
            <person name="Kawabata A."/>
            <person name="Hikiji T."/>
            <person name="Kobatake N."/>
            <person name="Inagaki H."/>
            <person name="Ikema Y."/>
            <person name="Okamoto S."/>
            <person name="Okitani R."/>
            <person name="Kawakami T."/>
            <person name="Noguchi S."/>
            <person name="Itoh T."/>
            <person name="Shigeta K."/>
            <person name="Senba T."/>
            <person name="Matsumura K."/>
            <person name="Nakajima Y."/>
            <person name="Mizuno T."/>
            <person name="Morinaga M."/>
            <person name="Sasaki M."/>
            <person name="Togashi T."/>
            <person name="Oyama M."/>
            <person name="Hata H."/>
            <person name="Watanabe M."/>
            <person name="Komatsu T."/>
            <person name="Mizushima-Sugano J."/>
            <person name="Satoh T."/>
            <person name="Shirai Y."/>
            <person name="Takahashi Y."/>
            <person name="Nakagawa K."/>
            <person name="Okumura K."/>
            <person name="Nagase T."/>
            <person name="Nomura N."/>
            <person name="Kikuchi H."/>
            <person name="Masuho Y."/>
            <person name="Yamashita R."/>
            <person name="Nakai K."/>
            <person name="Yada T."/>
            <person name="Nakamura Y."/>
            <person name="Ohara O."/>
            <person name="Isogai T."/>
            <person name="Sugano S."/>
        </authorList>
    </citation>
    <scope>NUCLEOTIDE SEQUENCE [LARGE SCALE MRNA] (ISOFORM 2)</scope>
    <source>
        <tissue>Teratocarcinoma</tissue>
    </source>
</reference>
<reference key="3">
    <citation type="journal article" date="2004" name="Genome Res.">
        <title>The status, quality, and expansion of the NIH full-length cDNA project: the Mammalian Gene Collection (MGC).</title>
        <authorList>
            <consortium name="The MGC Project Team"/>
        </authorList>
    </citation>
    <scope>NUCLEOTIDE SEQUENCE [LARGE SCALE MRNA] (ISOFORM 1)</scope>
    <source>
        <tissue>Uterus</tissue>
    </source>
</reference>
<reference key="4">
    <citation type="journal article" date="2013" name="J. Proteome Res.">
        <title>Toward a comprehensive characterization of a human cancer cell phosphoproteome.</title>
        <authorList>
            <person name="Zhou H."/>
            <person name="Di Palma S."/>
            <person name="Preisinger C."/>
            <person name="Peng M."/>
            <person name="Polat A.N."/>
            <person name="Heck A.J."/>
            <person name="Mohammed S."/>
        </authorList>
    </citation>
    <scope>IDENTIFICATION BY MASS SPECTROMETRY [LARGE SCALE ANALYSIS]</scope>
    <source>
        <tissue>Erythroleukemia</tissue>
    </source>
</reference>
<name>ADAT1_HUMAN</name>
<accession>Q9BUB4</accession>
<accession>Q9NVB7</accession>
<accession>Q9UNG3</accession>
<gene>
    <name type="primary">ADAT1</name>
</gene>